<keyword id="KW-0007">Acetylation</keyword>
<keyword id="KW-0025">Alternative splicing</keyword>
<keyword id="KW-0274">FAD</keyword>
<keyword id="KW-0276">Fatty acid metabolism</keyword>
<keyword id="KW-0285">Flavoprotein</keyword>
<keyword id="KW-0443">Lipid metabolism</keyword>
<keyword id="KW-0560">Oxidoreductase</keyword>
<keyword id="KW-0576">Peroxisome</keyword>
<keyword id="KW-0597">Phosphoprotein</keyword>
<keyword id="KW-1185">Reference proteome</keyword>
<dbReference type="EC" id="1.3.3.6" evidence="4"/>
<dbReference type="EMBL" id="AF463453">
    <property type="protein sequence ID" value="AAO15576.1"/>
    <property type="molecule type" value="mRNA"/>
</dbReference>
<dbReference type="EMBL" id="AF463454">
    <property type="protein sequence ID" value="AAO15577.1"/>
    <property type="molecule type" value="mRNA"/>
</dbReference>
<dbReference type="SMR" id="Q8HYL8"/>
<dbReference type="FunCoup" id="Q8HYL8">
    <property type="interactions" value="1773"/>
</dbReference>
<dbReference type="InParanoid" id="Q8HYL8"/>
<dbReference type="BRENDA" id="1.3.3.6">
    <property type="organism ID" value="4730"/>
</dbReference>
<dbReference type="UniPathway" id="UPA00661"/>
<dbReference type="Proteomes" id="UP000515140">
    <property type="component" value="Unplaced"/>
</dbReference>
<dbReference type="GO" id="GO:0005777">
    <property type="term" value="C:peroxisome"/>
    <property type="evidence" value="ECO:0000250"/>
    <property type="project" value="UniProtKB"/>
</dbReference>
<dbReference type="GO" id="GO:0003997">
    <property type="term" value="F:acyl-CoA oxidase activity"/>
    <property type="evidence" value="ECO:0000250"/>
    <property type="project" value="UniProtKB"/>
</dbReference>
<dbReference type="GO" id="GO:0071949">
    <property type="term" value="F:FAD binding"/>
    <property type="evidence" value="ECO:0007669"/>
    <property type="project" value="InterPro"/>
</dbReference>
<dbReference type="GO" id="GO:0005504">
    <property type="term" value="F:fatty acid binding"/>
    <property type="evidence" value="ECO:0007669"/>
    <property type="project" value="InterPro"/>
</dbReference>
<dbReference type="GO" id="GO:0016401">
    <property type="term" value="F:palmitoyl-CoA oxidase activity"/>
    <property type="evidence" value="ECO:0007669"/>
    <property type="project" value="TreeGrafter"/>
</dbReference>
<dbReference type="GO" id="GO:0042803">
    <property type="term" value="F:protein homodimerization activity"/>
    <property type="evidence" value="ECO:0000250"/>
    <property type="project" value="UniProtKB"/>
</dbReference>
<dbReference type="GO" id="GO:0009062">
    <property type="term" value="P:fatty acid catabolic process"/>
    <property type="evidence" value="ECO:0000250"/>
    <property type="project" value="UniProtKB"/>
</dbReference>
<dbReference type="GO" id="GO:0019395">
    <property type="term" value="P:fatty acid oxidation"/>
    <property type="evidence" value="ECO:0000250"/>
    <property type="project" value="UniProtKB"/>
</dbReference>
<dbReference type="GO" id="GO:0006091">
    <property type="term" value="P:generation of precursor metabolites and energy"/>
    <property type="evidence" value="ECO:0000250"/>
    <property type="project" value="UniProtKB"/>
</dbReference>
<dbReference type="GO" id="GO:0050665">
    <property type="term" value="P:hydrogen peroxide biosynthetic process"/>
    <property type="evidence" value="ECO:0000250"/>
    <property type="project" value="UniProtKB"/>
</dbReference>
<dbReference type="GO" id="GO:0055088">
    <property type="term" value="P:lipid homeostasis"/>
    <property type="evidence" value="ECO:0007669"/>
    <property type="project" value="TreeGrafter"/>
</dbReference>
<dbReference type="GO" id="GO:0006629">
    <property type="term" value="P:lipid metabolic process"/>
    <property type="evidence" value="ECO:0000250"/>
    <property type="project" value="UniProtKB"/>
</dbReference>
<dbReference type="GO" id="GO:0006693">
    <property type="term" value="P:prostaglandin metabolic process"/>
    <property type="evidence" value="ECO:0000250"/>
    <property type="project" value="UniProtKB"/>
</dbReference>
<dbReference type="GO" id="GO:0140493">
    <property type="term" value="P:very long-chain fatty acid beta-oxidation"/>
    <property type="evidence" value="ECO:0000250"/>
    <property type="project" value="UniProtKB"/>
</dbReference>
<dbReference type="CDD" id="cd01150">
    <property type="entry name" value="AXO"/>
    <property type="match status" value="1"/>
</dbReference>
<dbReference type="FunFam" id="1.10.540.10:FF:000006">
    <property type="entry name" value="Acyl-coenzyme A oxidase"/>
    <property type="match status" value="1"/>
</dbReference>
<dbReference type="FunFam" id="1.20.140.10:FF:000005">
    <property type="entry name" value="Acyl-coenzyme A oxidase"/>
    <property type="match status" value="1"/>
</dbReference>
<dbReference type="FunFam" id="1.20.140.10:FF:000007">
    <property type="entry name" value="Acyl-coenzyme A oxidase"/>
    <property type="match status" value="1"/>
</dbReference>
<dbReference type="FunFam" id="2.40.110.10:FF:000003">
    <property type="entry name" value="Acyl-coenzyme A oxidase"/>
    <property type="match status" value="1"/>
</dbReference>
<dbReference type="Gene3D" id="1.10.540.10">
    <property type="entry name" value="Acyl-CoA dehydrogenase/oxidase, N-terminal domain"/>
    <property type="match status" value="1"/>
</dbReference>
<dbReference type="Gene3D" id="2.40.110.10">
    <property type="entry name" value="Butyryl-CoA Dehydrogenase, subunit A, domain 2"/>
    <property type="match status" value="1"/>
</dbReference>
<dbReference type="Gene3D" id="1.20.140.10">
    <property type="entry name" value="Butyryl-CoA Dehydrogenase, subunit A, domain 3"/>
    <property type="match status" value="2"/>
</dbReference>
<dbReference type="InterPro" id="IPR034171">
    <property type="entry name" value="ACO"/>
</dbReference>
<dbReference type="InterPro" id="IPR055060">
    <property type="entry name" value="ACOX_C_alpha1"/>
</dbReference>
<dbReference type="InterPro" id="IPR029320">
    <property type="entry name" value="Acyl-CoA_ox_N"/>
</dbReference>
<dbReference type="InterPro" id="IPR006091">
    <property type="entry name" value="Acyl-CoA_Oxase/DH_mid-dom"/>
</dbReference>
<dbReference type="InterPro" id="IPR046373">
    <property type="entry name" value="Acyl-CoA_Oxase/DH_mid-dom_sf"/>
</dbReference>
<dbReference type="InterPro" id="IPR012258">
    <property type="entry name" value="Acyl-CoA_oxidase"/>
</dbReference>
<dbReference type="InterPro" id="IPR002655">
    <property type="entry name" value="Acyl-CoA_oxidase_C"/>
</dbReference>
<dbReference type="InterPro" id="IPR036250">
    <property type="entry name" value="AcylCo_DH-like_C"/>
</dbReference>
<dbReference type="InterPro" id="IPR037069">
    <property type="entry name" value="AcylCoA_DH/ox_N_sf"/>
</dbReference>
<dbReference type="InterPro" id="IPR009100">
    <property type="entry name" value="AcylCoA_DH/oxidase_NM_dom_sf"/>
</dbReference>
<dbReference type="PANTHER" id="PTHR10909">
    <property type="entry name" value="ELECTRON TRANSPORT OXIDOREDUCTASE"/>
    <property type="match status" value="1"/>
</dbReference>
<dbReference type="PANTHER" id="PTHR10909:SF250">
    <property type="entry name" value="PEROXISOMAL ACYL-COENZYME A OXIDASE 1"/>
    <property type="match status" value="1"/>
</dbReference>
<dbReference type="Pfam" id="PF01756">
    <property type="entry name" value="ACOX"/>
    <property type="match status" value="1"/>
</dbReference>
<dbReference type="Pfam" id="PF22924">
    <property type="entry name" value="ACOX_C_alpha1"/>
    <property type="match status" value="1"/>
</dbReference>
<dbReference type="Pfam" id="PF02770">
    <property type="entry name" value="Acyl-CoA_dh_M"/>
    <property type="match status" value="1"/>
</dbReference>
<dbReference type="Pfam" id="PF14749">
    <property type="entry name" value="Acyl-CoA_ox_N"/>
    <property type="match status" value="1"/>
</dbReference>
<dbReference type="PIRSF" id="PIRSF000168">
    <property type="entry name" value="Acyl-CoA_oxidase"/>
    <property type="match status" value="1"/>
</dbReference>
<dbReference type="SUPFAM" id="SSF47203">
    <property type="entry name" value="Acyl-CoA dehydrogenase C-terminal domain-like"/>
    <property type="match status" value="2"/>
</dbReference>
<dbReference type="SUPFAM" id="SSF56645">
    <property type="entry name" value="Acyl-CoA dehydrogenase NM domain-like"/>
    <property type="match status" value="1"/>
</dbReference>
<comment type="function">
    <text evidence="4">Involved in the initial and rate-limiting step of peroxisomal beta-oxidation of straight-chain saturated and unsaturated very-long-chain fatty acids (PubMed:12758125). Catalyzes the desaturation of fatty acyl-CoAs such as palmitoyl-CoA (hexadecanoyl-CoA) to 2-trans-enoyl-CoAs ((2E)-enoyl-CoAs) such as (2E)-hexadecenoyl-CoA, and donates electrons directly to molecular oxygen (O(2)), thereby producing hydrogen peroxide (H(2)O(2)) (PubMed:12758125). Isoform 2 shows higher activity with hexadecanoyl-CoA as substrate than isoform 1 (PubMed:12758125).</text>
</comment>
<comment type="catalytic activity">
    <molecule>Isoform 1</molecule>
    <reaction evidence="4">
        <text>a 2,3-saturated acyl-CoA + O2 = a (2E)-enoyl-CoA + H2O2</text>
        <dbReference type="Rhea" id="RHEA:38959"/>
        <dbReference type="ChEBI" id="CHEBI:15379"/>
        <dbReference type="ChEBI" id="CHEBI:16240"/>
        <dbReference type="ChEBI" id="CHEBI:58856"/>
        <dbReference type="ChEBI" id="CHEBI:65111"/>
        <dbReference type="EC" id="1.3.3.6"/>
    </reaction>
    <physiologicalReaction direction="left-to-right" evidence="7">
        <dbReference type="Rhea" id="RHEA:38960"/>
    </physiologicalReaction>
</comment>
<comment type="catalytic activity">
    <molecule>Isoform 2</molecule>
    <reaction evidence="4">
        <text>a 2,3-saturated acyl-CoA + O2 = a (2E)-enoyl-CoA + H2O2</text>
        <dbReference type="Rhea" id="RHEA:38959"/>
        <dbReference type="ChEBI" id="CHEBI:15379"/>
        <dbReference type="ChEBI" id="CHEBI:16240"/>
        <dbReference type="ChEBI" id="CHEBI:58856"/>
        <dbReference type="ChEBI" id="CHEBI:65111"/>
        <dbReference type="EC" id="1.3.3.6"/>
    </reaction>
    <physiologicalReaction direction="left-to-right" evidence="7">
        <dbReference type="Rhea" id="RHEA:38960"/>
    </physiologicalReaction>
</comment>
<comment type="catalytic activity">
    <molecule>Isoform 2</molecule>
    <reaction evidence="4">
        <text>hexadecanoyl-CoA + O2 = (2E)-hexadecenoyl-CoA + H2O2</text>
        <dbReference type="Rhea" id="RHEA:40167"/>
        <dbReference type="ChEBI" id="CHEBI:15379"/>
        <dbReference type="ChEBI" id="CHEBI:16240"/>
        <dbReference type="ChEBI" id="CHEBI:57379"/>
        <dbReference type="ChEBI" id="CHEBI:61526"/>
    </reaction>
    <physiologicalReaction direction="left-to-right" evidence="7">
        <dbReference type="Rhea" id="RHEA:40168"/>
    </physiologicalReaction>
</comment>
<comment type="catalytic activity">
    <molecule>Isoform 1</molecule>
    <reaction evidence="4">
        <text>hexadecanoyl-CoA + O2 = (2E)-hexadecenoyl-CoA + H2O2</text>
        <dbReference type="Rhea" id="RHEA:40167"/>
        <dbReference type="ChEBI" id="CHEBI:15379"/>
        <dbReference type="ChEBI" id="CHEBI:16240"/>
        <dbReference type="ChEBI" id="CHEBI:57379"/>
        <dbReference type="ChEBI" id="CHEBI:61526"/>
    </reaction>
    <physiologicalReaction direction="left-to-right" evidence="7">
        <dbReference type="Rhea" id="RHEA:40168"/>
    </physiologicalReaction>
</comment>
<comment type="catalytic activity">
    <reaction evidence="2">
        <text>dodecanoyl-CoA + O2 = (2E)-dodecenoyl-CoA + H2O2</text>
        <dbReference type="Rhea" id="RHEA:40171"/>
        <dbReference type="ChEBI" id="CHEBI:15379"/>
        <dbReference type="ChEBI" id="CHEBI:16240"/>
        <dbReference type="ChEBI" id="CHEBI:57330"/>
        <dbReference type="ChEBI" id="CHEBI:57375"/>
    </reaction>
    <physiologicalReaction direction="left-to-right" evidence="2">
        <dbReference type="Rhea" id="RHEA:40172"/>
    </physiologicalReaction>
</comment>
<comment type="catalytic activity">
    <reaction evidence="2">
        <text>octanoyl-CoA + O2 = (2E)-octenoyl-CoA + H2O2</text>
        <dbReference type="Rhea" id="RHEA:40175"/>
        <dbReference type="ChEBI" id="CHEBI:15379"/>
        <dbReference type="ChEBI" id="CHEBI:16240"/>
        <dbReference type="ChEBI" id="CHEBI:57386"/>
        <dbReference type="ChEBI" id="CHEBI:62242"/>
    </reaction>
    <physiologicalReaction direction="left-to-right" evidence="2">
        <dbReference type="Rhea" id="RHEA:40176"/>
    </physiologicalReaction>
</comment>
<comment type="catalytic activity">
    <reaction evidence="2">
        <text>decanoyl-CoA + O2 = (2E)-decenoyl-CoA + H2O2</text>
        <dbReference type="Rhea" id="RHEA:40179"/>
        <dbReference type="ChEBI" id="CHEBI:15379"/>
        <dbReference type="ChEBI" id="CHEBI:16240"/>
        <dbReference type="ChEBI" id="CHEBI:61406"/>
        <dbReference type="ChEBI" id="CHEBI:61430"/>
    </reaction>
    <physiologicalReaction direction="left-to-right" evidence="2">
        <dbReference type="Rhea" id="RHEA:40180"/>
    </physiologicalReaction>
</comment>
<comment type="catalytic activity">
    <reaction evidence="2">
        <text>tetradecanoyl-CoA + O2 = (2E)-tetradecenoyl-CoA + H2O2</text>
        <dbReference type="Rhea" id="RHEA:40183"/>
        <dbReference type="ChEBI" id="CHEBI:15379"/>
        <dbReference type="ChEBI" id="CHEBI:16240"/>
        <dbReference type="ChEBI" id="CHEBI:57385"/>
        <dbReference type="ChEBI" id="CHEBI:61405"/>
    </reaction>
    <physiologicalReaction direction="left-to-right" evidence="2">
        <dbReference type="Rhea" id="RHEA:40184"/>
    </physiologicalReaction>
</comment>
<comment type="catalytic activity">
    <reaction evidence="2">
        <text>hexadecanedioyl-CoA + O2 = (2E)-hexadecenedioyl-CoA + H2O2</text>
        <dbReference type="Rhea" id="RHEA:40275"/>
        <dbReference type="ChEBI" id="CHEBI:15379"/>
        <dbReference type="ChEBI" id="CHEBI:16240"/>
        <dbReference type="ChEBI" id="CHEBI:77075"/>
        <dbReference type="ChEBI" id="CHEBI:77085"/>
    </reaction>
    <physiologicalReaction direction="left-to-right" evidence="2">
        <dbReference type="Rhea" id="RHEA:40276"/>
    </physiologicalReaction>
</comment>
<comment type="catalytic activity">
    <reaction evidence="1">
        <text>tetracosanoyl-CoA + O2 = (2E)-tetracosenoyl-CoA + H2O2</text>
        <dbReference type="Rhea" id="RHEA:40319"/>
        <dbReference type="ChEBI" id="CHEBI:15379"/>
        <dbReference type="ChEBI" id="CHEBI:16240"/>
        <dbReference type="ChEBI" id="CHEBI:65052"/>
        <dbReference type="ChEBI" id="CHEBI:74693"/>
    </reaction>
    <physiologicalReaction direction="left-to-right" evidence="1">
        <dbReference type="Rhea" id="RHEA:40320"/>
    </physiologicalReaction>
</comment>
<comment type="catalytic activity">
    <reaction evidence="1">
        <text>glutaryl-CoA + O2 = (2E)-glutaconyl-CoA + H2O2</text>
        <dbReference type="Rhea" id="RHEA:40315"/>
        <dbReference type="ChEBI" id="CHEBI:15379"/>
        <dbReference type="ChEBI" id="CHEBI:16240"/>
        <dbReference type="ChEBI" id="CHEBI:57353"/>
        <dbReference type="ChEBI" id="CHEBI:57378"/>
    </reaction>
    <physiologicalReaction direction="left-to-right" evidence="1">
        <dbReference type="Rhea" id="RHEA:40316"/>
    </physiologicalReaction>
</comment>
<comment type="catalytic activity">
    <reaction evidence="1">
        <text>hexanoyl-CoA + O2 = (2E)-hexenoyl-CoA + H2O2</text>
        <dbReference type="Rhea" id="RHEA:40311"/>
        <dbReference type="ChEBI" id="CHEBI:15379"/>
        <dbReference type="ChEBI" id="CHEBI:16240"/>
        <dbReference type="ChEBI" id="CHEBI:62077"/>
        <dbReference type="ChEBI" id="CHEBI:62620"/>
    </reaction>
    <physiologicalReaction direction="left-to-right" evidence="1">
        <dbReference type="Rhea" id="RHEA:40312"/>
    </physiologicalReaction>
</comment>
<comment type="catalytic activity">
    <reaction evidence="1">
        <text>octadecanoyl-CoA + O2 = (2E)-octadecenoyl-CoA + H2O2</text>
        <dbReference type="Rhea" id="RHEA:38971"/>
        <dbReference type="ChEBI" id="CHEBI:15379"/>
        <dbReference type="ChEBI" id="CHEBI:16240"/>
        <dbReference type="ChEBI" id="CHEBI:57394"/>
        <dbReference type="ChEBI" id="CHEBI:71412"/>
    </reaction>
    <physiologicalReaction direction="left-to-right" evidence="1">
        <dbReference type="Rhea" id="RHEA:38972"/>
    </physiologicalReaction>
</comment>
<comment type="catalytic activity">
    <reaction evidence="2">
        <text>(5Z,8Z,11Z,14Z,17Z)-eicosapentaenoyl-CoA + O2 = (2E,5Z,8Z,11Z,14Z,17Z)-icosahexaenoyl-CoA + H2O2</text>
        <dbReference type="Rhea" id="RHEA:69643"/>
        <dbReference type="ChEBI" id="CHEBI:15379"/>
        <dbReference type="ChEBI" id="CHEBI:16240"/>
        <dbReference type="ChEBI" id="CHEBI:73862"/>
        <dbReference type="ChEBI" id="CHEBI:187901"/>
    </reaction>
    <physiologicalReaction direction="left-to-right" evidence="2">
        <dbReference type="Rhea" id="RHEA:69644"/>
    </physiologicalReaction>
</comment>
<comment type="catalytic activity">
    <reaction evidence="3">
        <text>(6Z,9Z,12Z,15Z,18Z,21Z)-tetracosahexaenoyl-CoA + O2 = (2E,6Z,9Z,12Z,15Z,18Z,21Z)-tetracosaheptaenoyl-CoA + H2O2</text>
        <dbReference type="Rhea" id="RHEA:39119"/>
        <dbReference type="ChEBI" id="CHEBI:15379"/>
        <dbReference type="ChEBI" id="CHEBI:16240"/>
        <dbReference type="ChEBI" id="CHEBI:74086"/>
        <dbReference type="ChEBI" id="CHEBI:76360"/>
    </reaction>
    <physiologicalReaction direction="left-to-right" evidence="3">
        <dbReference type="Rhea" id="RHEA:39120"/>
    </physiologicalReaction>
</comment>
<comment type="cofactor">
    <cofactor evidence="4">
        <name>FAD</name>
        <dbReference type="ChEBI" id="CHEBI:57692"/>
    </cofactor>
</comment>
<comment type="biophysicochemical properties">
    <molecule>Isoform 1</molecule>
    <kinetics>
        <KM evidence="4">38 uM for hexadecanoyl-CoA (palmitoyl-CoA)</KM>
        <Vmax evidence="4">677.0 nmol/min/g enzyme using hexadecanoyl-CoA (palmitoyl-CoA) as substrate</Vmax>
    </kinetics>
</comment>
<comment type="biophysicochemical properties">
    <molecule>Isoform 2</molecule>
    <kinetics>
        <KM evidence="4">28 uM for hexadecanoyl-CoA (palmitoyl-CoA)</KM>
        <Vmax evidence="4">1499.0 nmol/min/g enzyme using hexadecanoyl-CoA (palmitoyl-CoA) as substrate</Vmax>
    </kinetics>
</comment>
<comment type="pathway">
    <text evidence="7">Lipid metabolism; peroxisomal fatty acid beta-oxidation.</text>
</comment>
<comment type="subunit">
    <text evidence="1 2">Homodimer (By similarity). Interacts with LONP2 (By similarity).</text>
</comment>
<comment type="subcellular location">
    <subcellularLocation>
        <location evidence="4">Peroxisome</location>
    </subcellularLocation>
</comment>
<comment type="alternative products">
    <event type="alternative splicing"/>
    <isoform>
        <id>Q8HYL8-2</id>
        <name>1</name>
        <name>AOX2</name>
        <sequence type="displayed"/>
    </isoform>
    <isoform>
        <id>Q8HYL8-1</id>
        <name>2</name>
        <name>AOX1</name>
        <sequence type="described" ref="VSP_042478"/>
    </isoform>
</comment>
<comment type="similarity">
    <text evidence="6">Belongs to the acyl-CoA oxidase family.</text>
</comment>
<gene>
    <name type="primary">ACOX1</name>
</gene>
<organism>
    <name type="scientific">Phascolarctos cinereus</name>
    <name type="common">Koala</name>
    <dbReference type="NCBI Taxonomy" id="38626"/>
    <lineage>
        <taxon>Eukaryota</taxon>
        <taxon>Metazoa</taxon>
        <taxon>Chordata</taxon>
        <taxon>Craniata</taxon>
        <taxon>Vertebrata</taxon>
        <taxon>Euteleostomi</taxon>
        <taxon>Mammalia</taxon>
        <taxon>Metatheria</taxon>
        <taxon>Diprotodontia</taxon>
        <taxon>Phascolarctidae</taxon>
        <taxon>Phascolarctos</taxon>
    </lineage>
</organism>
<evidence type="ECO:0000250" key="1">
    <source>
        <dbReference type="UniProtKB" id="P07872"/>
    </source>
</evidence>
<evidence type="ECO:0000250" key="2">
    <source>
        <dbReference type="UniProtKB" id="Q15067"/>
    </source>
</evidence>
<evidence type="ECO:0000250" key="3">
    <source>
        <dbReference type="UniProtKB" id="Q9R0H0"/>
    </source>
</evidence>
<evidence type="ECO:0000269" key="4">
    <source>
    </source>
</evidence>
<evidence type="ECO:0000303" key="5">
    <source>
    </source>
</evidence>
<evidence type="ECO:0000305" key="6"/>
<evidence type="ECO:0000305" key="7">
    <source>
    </source>
</evidence>
<feature type="chain" id="PRO_0000204679" description="Peroxisomal acyl-coenzyme A oxidase 1">
    <location>
        <begin position="1"/>
        <end position="661"/>
    </location>
</feature>
<feature type="short sequence motif" description="Microbody targeting signal">
    <location>
        <begin position="659"/>
        <end position="661"/>
    </location>
</feature>
<feature type="active site" description="Proton acceptor" evidence="1">
    <location>
        <position position="421"/>
    </location>
</feature>
<feature type="binding site" evidence="1">
    <location>
        <position position="139"/>
    </location>
    <ligand>
        <name>FAD</name>
        <dbReference type="ChEBI" id="CHEBI:57692"/>
    </ligand>
</feature>
<feature type="binding site" evidence="1">
    <location>
        <position position="178"/>
    </location>
    <ligand>
        <name>FAD</name>
        <dbReference type="ChEBI" id="CHEBI:57692"/>
    </ligand>
</feature>
<feature type="modified residue" description="N6-succinyllysine" evidence="3">
    <location>
        <position position="89"/>
    </location>
</feature>
<feature type="modified residue" description="N6-succinyllysine" evidence="3">
    <location>
        <position position="90"/>
    </location>
</feature>
<feature type="modified residue" description="N6-succinyllysine" evidence="3">
    <location>
        <position position="159"/>
    </location>
</feature>
<feature type="modified residue" description="N6-acetyllysine" evidence="3">
    <location>
        <position position="216"/>
    </location>
</feature>
<feature type="modified residue" description="N6-succinyllysine" evidence="3">
    <location>
        <position position="241"/>
    </location>
</feature>
<feature type="modified residue" description="N6-acetyllysine" evidence="2">
    <location>
        <position position="255"/>
    </location>
</feature>
<feature type="modified residue" description="N6-acetyllysine" evidence="2">
    <location>
        <position position="267"/>
    </location>
</feature>
<feature type="modified residue" description="N6-acetyllysine" evidence="3">
    <location>
        <position position="272"/>
    </location>
</feature>
<feature type="modified residue" description="N6-succinyllysine" evidence="3">
    <location>
        <position position="349"/>
    </location>
</feature>
<feature type="modified residue" description="N6-acetyllysine; alternate" evidence="2">
    <location>
        <position position="437"/>
    </location>
</feature>
<feature type="modified residue" description="N6-succinyllysine; alternate" evidence="3">
    <location>
        <position position="437"/>
    </location>
</feature>
<feature type="modified residue" description="N6-acetyllysine; alternate" evidence="3">
    <location>
        <position position="446"/>
    </location>
</feature>
<feature type="modified residue" description="N6-succinyllysine; alternate" evidence="3">
    <location>
        <position position="446"/>
    </location>
</feature>
<feature type="modified residue" description="N6-acetyllysine; alternate" evidence="3">
    <location>
        <position position="512"/>
    </location>
</feature>
<feature type="modified residue" description="N6-succinyllysine; alternate" evidence="3">
    <location>
        <position position="512"/>
    </location>
</feature>
<feature type="modified residue" description="N6-acetyllysine; alternate" evidence="3">
    <location>
        <position position="637"/>
    </location>
</feature>
<feature type="modified residue" description="N6-succinyllysine; alternate" evidence="3">
    <location>
        <position position="637"/>
    </location>
</feature>
<feature type="modified residue" description="N6-succinyllysine" evidence="3">
    <location>
        <position position="643"/>
    </location>
</feature>
<feature type="modified residue" description="Phosphoserine" evidence="3">
    <location>
        <position position="649"/>
    </location>
</feature>
<feature type="modified residue" description="N6-acetyllysine" evidence="3">
    <location>
        <position position="652"/>
    </location>
</feature>
<feature type="modified residue" description="N6-succinyllysine" evidence="3">
    <location>
        <position position="655"/>
    </location>
</feature>
<feature type="splice variant" id="VSP_042478" description="In isoform 2." evidence="5">
    <original>KPQLINFVEPVGLTYSMFIPTLLDQGTTAQQQKWLPPTQGLQ</original>
    <variation>NFVHRGRPEPLDLHLGMFLPTLLHQATQEQQERFFIPAWNLE</variation>
    <location>
        <begin position="90"/>
        <end position="131"/>
    </location>
</feature>
<feature type="sequence conflict" description="In Ref. 1; AAO15576." evidence="6" ref="1">
    <original>R</original>
    <variation>Q</variation>
    <location>
        <position position="313"/>
    </location>
</feature>
<feature type="sequence conflict" description="In Ref. 1; AAO15576." evidence="6" ref="1">
    <original>N</original>
    <variation>S</variation>
    <location>
        <position position="360"/>
    </location>
</feature>
<feature type="sequence conflict" description="In Ref. 1; AAO15577." evidence="6" ref="1">
    <original>T</original>
    <variation>A</variation>
    <location>
        <position position="374"/>
    </location>
</feature>
<feature type="sequence conflict" description="In Ref. 1; AAO15577." evidence="6" ref="1">
    <original>E</original>
    <variation>G</variation>
    <location>
        <position position="528"/>
    </location>
</feature>
<feature type="sequence conflict" description="In Ref. 1; AAO15577." evidence="6" ref="1">
    <original>L</original>
    <variation>P</variation>
    <location>
        <position position="564"/>
    </location>
</feature>
<sequence>MNPDLRRERDAASFDAEKLTYILDGGSERTRRRREIENLILNDPDFKHEDLNFLTRSERYEIAVRKSATMVKKMRDFGIADPEEIMWFKKPQLINFVEPVGLTYSMFIPTLLDQGTTAQQQKWLPPTQGLQIIGTYAQTEMGHGTHLRGLETTATYDPKTQEFILNSPTVTSIKWWPGGLGKTSNHAIVLAQLYTKGECYGLHAFIVPIREMGTHKPFPGIIVGDIGPKFGYDEMDNGYLKMDNYRIPRENMLMKYAQVKPDGTYVKPLSNKLTYGTMVFVRSFLVGEAARSLSKACTIAIRYSLIRHQSEIRPGDPEPQILDFQTQQYKLFPLLATAYAFQFVGAYMKETYHRINVDINQGNLNELPELHALTAGLKAFTSWTTNSGIEACRMACGGHGYSHCSGLPNIYVTFTPTCTFEGENTVMMLQTARFLMKSYDQVHSGKLVGGMVSYLNDLPSQRIQPQQVAAWPAMVDINNPDSLTEAYKHRAARLVEAAARNLQAEMKHRKSKEIAWNFTSVDLVRASEAHCHYVVVKLFSGNLSKIDDKPIQAVLTNLCLLYALYGISQNSGDFLQGGILTESQLTQVNQRVKELLTLIRPESAALVDAFDFQDVSLGSVLGRYDGNIYENMFEWAKKSPLNKSEVHESYHKHLKPLQSKL</sequence>
<accession>Q8HYL8</accession>
<accession>Q8HYL7</accession>
<protein>
    <recommendedName>
        <fullName evidence="2">Peroxisomal acyl-coenzyme A oxidase 1</fullName>
        <shortName evidence="5">AOX</shortName>
        <ecNumber evidence="4">1.3.3.6</ecNumber>
    </recommendedName>
    <alternativeName>
        <fullName evidence="2">Palmitoyl-CoA oxidase</fullName>
    </alternativeName>
    <alternativeName>
        <fullName>Peroxisomal fatty acyl-CoA oxidase</fullName>
    </alternativeName>
    <alternativeName>
        <fullName>Straight-chain acyl-CoA oxidase</fullName>
    </alternativeName>
</protein>
<name>ACOX1_PHACI</name>
<proteinExistence type="evidence at protein level"/>
<reference key="1">
    <citation type="journal article" date="2003" name="Gene">
        <title>Identification and cloning of two forms of liver peroxisomal fatty Acyl CoA oxidase from the koala (Phascolarctos cinereus).</title>
        <authorList>
            <person name="Ngo S.N.T."/>
            <person name="McKinnon R.A."/>
            <person name="Stupans I."/>
        </authorList>
    </citation>
    <scope>NUCLEOTIDE SEQUENCE [MRNA] (ISOFORMS 1 AND 2)</scope>
    <scope>FUNCTION</scope>
    <scope>CATALYTIC ACTIVITY (ISOFORMS 1 AND 2)</scope>
    <scope>BIOPHYSICOCHEMICAL PROPERTIES (ISOFORMS 1 AND 2)</scope>
    <scope>PATHWAY</scope>
    <scope>COFACTOR</scope>
    <scope>SUBCELLULAR LOCATION</scope>
    <source>
        <tissue>Liver</tissue>
    </source>
</reference>